<sequence>MIIYKDIISGDEVLSDNFKIKEVDGVLYECDCRKYLKRKNEDIQLEGANPSAEEGDDDAGGDGEEVMVHDIEDQFRLVWLKTEEGMKPSKDAFKSHLKTYMKKVLAKLQEKGVPEAEIDAFKKGAPAAVKKILANYDNYDVLMGHSMDGDAMHVLIDFREDGVTPYATLWKHGLEEMKV</sequence>
<gene>
    <name type="ORF">AFUA_1G16840</name>
</gene>
<reference key="1">
    <citation type="journal article" date="2005" name="Nature">
        <title>Genomic sequence of the pathogenic and allergenic filamentous fungus Aspergillus fumigatus.</title>
        <authorList>
            <person name="Nierman W.C."/>
            <person name="Pain A."/>
            <person name="Anderson M.J."/>
            <person name="Wortman J.R."/>
            <person name="Kim H.S."/>
            <person name="Arroyo J."/>
            <person name="Berriman M."/>
            <person name="Abe K."/>
            <person name="Archer D.B."/>
            <person name="Bermejo C."/>
            <person name="Bennett J.W."/>
            <person name="Bowyer P."/>
            <person name="Chen D."/>
            <person name="Collins M."/>
            <person name="Coulsen R."/>
            <person name="Davies R."/>
            <person name="Dyer P.S."/>
            <person name="Farman M.L."/>
            <person name="Fedorova N."/>
            <person name="Fedorova N.D."/>
            <person name="Feldblyum T.V."/>
            <person name="Fischer R."/>
            <person name="Fosker N."/>
            <person name="Fraser A."/>
            <person name="Garcia J.L."/>
            <person name="Garcia M.J."/>
            <person name="Goble A."/>
            <person name="Goldman G.H."/>
            <person name="Gomi K."/>
            <person name="Griffith-Jones S."/>
            <person name="Gwilliam R."/>
            <person name="Haas B.J."/>
            <person name="Haas H."/>
            <person name="Harris D.E."/>
            <person name="Horiuchi H."/>
            <person name="Huang J."/>
            <person name="Humphray S."/>
            <person name="Jimenez J."/>
            <person name="Keller N."/>
            <person name="Khouri H."/>
            <person name="Kitamoto K."/>
            <person name="Kobayashi T."/>
            <person name="Konzack S."/>
            <person name="Kulkarni R."/>
            <person name="Kumagai T."/>
            <person name="Lafton A."/>
            <person name="Latge J.-P."/>
            <person name="Li W."/>
            <person name="Lord A."/>
            <person name="Lu C."/>
            <person name="Majoros W.H."/>
            <person name="May G.S."/>
            <person name="Miller B.L."/>
            <person name="Mohamoud Y."/>
            <person name="Molina M."/>
            <person name="Monod M."/>
            <person name="Mouyna I."/>
            <person name="Mulligan S."/>
            <person name="Murphy L.D."/>
            <person name="O'Neil S."/>
            <person name="Paulsen I."/>
            <person name="Penalva M.A."/>
            <person name="Pertea M."/>
            <person name="Price C."/>
            <person name="Pritchard B.L."/>
            <person name="Quail M.A."/>
            <person name="Rabbinowitsch E."/>
            <person name="Rawlins N."/>
            <person name="Rajandream M.A."/>
            <person name="Reichard U."/>
            <person name="Renauld H."/>
            <person name="Robson G.D."/>
            <person name="Rodriguez de Cordoba S."/>
            <person name="Rodriguez-Pena J.M."/>
            <person name="Ronning C.M."/>
            <person name="Rutter S."/>
            <person name="Salzberg S.L."/>
            <person name="Sanchez M."/>
            <person name="Sanchez-Ferrero J.C."/>
            <person name="Saunders D."/>
            <person name="Seeger K."/>
            <person name="Squares R."/>
            <person name="Squares S."/>
            <person name="Takeuchi M."/>
            <person name="Tekaia F."/>
            <person name="Turner G."/>
            <person name="Vazquez de Aldana C.R."/>
            <person name="Weidman J."/>
            <person name="White O."/>
            <person name="Woodward J.R."/>
            <person name="Yu J.-H."/>
            <person name="Fraser C.M."/>
            <person name="Galagan J.E."/>
            <person name="Asai K."/>
            <person name="Machida M."/>
            <person name="Hall N."/>
            <person name="Barrell B.G."/>
            <person name="Denning D.W."/>
        </authorList>
    </citation>
    <scope>NUCLEOTIDE SEQUENCE [LARGE SCALE GENOMIC DNA]</scope>
    <source>
        <strain>ATCC MYA-4609 / CBS 101355 / FGSC A1100 / Af293</strain>
    </source>
</reference>
<name>TCTP_ASPFU</name>
<organism>
    <name type="scientific">Aspergillus fumigatus (strain ATCC MYA-4609 / CBS 101355 / FGSC A1100 / Af293)</name>
    <name type="common">Neosartorya fumigata</name>
    <dbReference type="NCBI Taxonomy" id="330879"/>
    <lineage>
        <taxon>Eukaryota</taxon>
        <taxon>Fungi</taxon>
        <taxon>Dikarya</taxon>
        <taxon>Ascomycota</taxon>
        <taxon>Pezizomycotina</taxon>
        <taxon>Eurotiomycetes</taxon>
        <taxon>Eurotiomycetidae</taxon>
        <taxon>Eurotiales</taxon>
        <taxon>Aspergillaceae</taxon>
        <taxon>Aspergillus</taxon>
        <taxon>Aspergillus subgen. Fumigati</taxon>
    </lineage>
</organism>
<protein>
    <recommendedName>
        <fullName>Translationally-controlled tumor protein homolog</fullName>
        <shortName>TCTP</shortName>
    </recommendedName>
</protein>
<dbReference type="EMBL" id="AAHF01000004">
    <property type="protein sequence ID" value="EAL91014.1"/>
    <property type="molecule type" value="Genomic_DNA"/>
</dbReference>
<dbReference type="RefSeq" id="XP_753052.1">
    <property type="nucleotide sequence ID" value="XM_747959.1"/>
</dbReference>
<dbReference type="SMR" id="Q4WRB8"/>
<dbReference type="FunCoup" id="Q4WRB8">
    <property type="interactions" value="870"/>
</dbReference>
<dbReference type="STRING" id="330879.Q4WRB8"/>
<dbReference type="EnsemblFungi" id="EAL91014">
    <property type="protein sequence ID" value="EAL91014"/>
    <property type="gene ID" value="AFUA_1G16840"/>
</dbReference>
<dbReference type="GeneID" id="3510078"/>
<dbReference type="KEGG" id="afm:AFUA_1G16840"/>
<dbReference type="VEuPathDB" id="FungiDB:Afu1g16840"/>
<dbReference type="eggNOG" id="KOG1727">
    <property type="taxonomic scope" value="Eukaryota"/>
</dbReference>
<dbReference type="HOGENOM" id="CLU_095877_0_0_1"/>
<dbReference type="InParanoid" id="Q4WRB8"/>
<dbReference type="OMA" id="PYATVWA"/>
<dbReference type="OrthoDB" id="10248936at2759"/>
<dbReference type="Proteomes" id="UP000002530">
    <property type="component" value="Chromosome 1"/>
</dbReference>
<dbReference type="GO" id="GO:0005737">
    <property type="term" value="C:cytoplasm"/>
    <property type="evidence" value="ECO:0000318"/>
    <property type="project" value="GO_Central"/>
</dbReference>
<dbReference type="GO" id="GO:0005874">
    <property type="term" value="C:microtubule"/>
    <property type="evidence" value="ECO:0007669"/>
    <property type="project" value="UniProtKB-KW"/>
</dbReference>
<dbReference type="GO" id="GO:0005509">
    <property type="term" value="F:calcium ion binding"/>
    <property type="evidence" value="ECO:0000318"/>
    <property type="project" value="GO_Central"/>
</dbReference>
<dbReference type="GO" id="GO:0006412">
    <property type="term" value="P:translation"/>
    <property type="evidence" value="ECO:0007669"/>
    <property type="project" value="UniProtKB-KW"/>
</dbReference>
<dbReference type="FunFam" id="2.170.150.10:FF:000009">
    <property type="entry name" value="Translationally-controlled tumor protein homolog"/>
    <property type="match status" value="1"/>
</dbReference>
<dbReference type="Gene3D" id="2.170.150.10">
    <property type="entry name" value="Metal Binding Protein, Guanine Nucleotide Exchange Factor, Chain A"/>
    <property type="match status" value="1"/>
</dbReference>
<dbReference type="InterPro" id="IPR011057">
    <property type="entry name" value="Mss4-like_sf"/>
</dbReference>
<dbReference type="InterPro" id="IPR011323">
    <property type="entry name" value="Mss4/transl-control_tumour"/>
</dbReference>
<dbReference type="InterPro" id="IPR034737">
    <property type="entry name" value="TCTP"/>
</dbReference>
<dbReference type="InterPro" id="IPR018103">
    <property type="entry name" value="Translation_control_tumour_CS"/>
</dbReference>
<dbReference type="InterPro" id="IPR018105">
    <property type="entry name" value="Translational_control_tumour_p"/>
</dbReference>
<dbReference type="PANTHER" id="PTHR11991">
    <property type="entry name" value="TRANSLATIONALLY CONTROLLED TUMOR PROTEIN-RELATED"/>
    <property type="match status" value="1"/>
</dbReference>
<dbReference type="PANTHER" id="PTHR11991:SF0">
    <property type="entry name" value="TRANSLATIONALLY-CONTROLLED TUMOR PROTEIN"/>
    <property type="match status" value="1"/>
</dbReference>
<dbReference type="Pfam" id="PF00838">
    <property type="entry name" value="TCTP"/>
    <property type="match status" value="1"/>
</dbReference>
<dbReference type="PRINTS" id="PR01653">
    <property type="entry name" value="TCTPROTEIN"/>
</dbReference>
<dbReference type="SUPFAM" id="SSF51316">
    <property type="entry name" value="Mss4-like"/>
    <property type="match status" value="1"/>
</dbReference>
<dbReference type="PROSITE" id="PS01002">
    <property type="entry name" value="TCTP_1"/>
    <property type="match status" value="1"/>
</dbReference>
<dbReference type="PROSITE" id="PS51797">
    <property type="entry name" value="TCTP_3"/>
    <property type="match status" value="1"/>
</dbReference>
<evidence type="ECO:0000250" key="1"/>
<evidence type="ECO:0000255" key="2">
    <source>
        <dbReference type="PROSITE-ProRule" id="PRU01133"/>
    </source>
</evidence>
<feature type="chain" id="PRO_0000252317" description="Translationally-controlled tumor protein homolog">
    <location>
        <begin position="1"/>
        <end position="179"/>
    </location>
</feature>
<feature type="domain" description="TCTP" evidence="2">
    <location>
        <begin position="1"/>
        <end position="179"/>
    </location>
</feature>
<comment type="function">
    <text evidence="1">Involved in protein synthesis. Involved in microtubule stabilization (By similarity).</text>
</comment>
<comment type="subcellular location">
    <subcellularLocation>
        <location evidence="1">Cytoplasm</location>
        <location evidence="1">Cytoskeleton</location>
    </subcellularLocation>
</comment>
<comment type="similarity">
    <text evidence="2">Belongs to the TCTP family.</text>
</comment>
<proteinExistence type="inferred from homology"/>
<accession>Q4WRB8</accession>
<keyword id="KW-0963">Cytoplasm</keyword>
<keyword id="KW-0206">Cytoskeleton</keyword>
<keyword id="KW-0493">Microtubule</keyword>
<keyword id="KW-0648">Protein biosynthesis</keyword>
<keyword id="KW-1185">Reference proteome</keyword>